<organism>
    <name type="scientific">Odobenus rosmarus rosmarus</name>
    <name type="common">Atlantic walrus</name>
    <dbReference type="NCBI Taxonomy" id="62698"/>
    <lineage>
        <taxon>Eukaryota</taxon>
        <taxon>Metazoa</taxon>
        <taxon>Chordata</taxon>
        <taxon>Craniata</taxon>
        <taxon>Vertebrata</taxon>
        <taxon>Euteleostomi</taxon>
        <taxon>Mammalia</taxon>
        <taxon>Eutheria</taxon>
        <taxon>Laurasiatheria</taxon>
        <taxon>Carnivora</taxon>
        <taxon>Caniformia</taxon>
        <taxon>Pinnipedia</taxon>
        <taxon>Odobenidae</taxon>
        <taxon>Odobenus</taxon>
    </lineage>
</organism>
<reference key="1">
    <citation type="journal article" date="2002" name="Proc. Natl. Acad. Sci. U.S.A.">
        <title>Mammalian mitogenomic relationships and the root of the eutherian tree.</title>
        <authorList>
            <person name="Arnason U."/>
            <person name="Adegoke J.A."/>
            <person name="Bodin K."/>
            <person name="Born E.W."/>
            <person name="Esa Y.B."/>
            <person name="Gullberg A."/>
            <person name="Nilsson M."/>
            <person name="Short R.V."/>
            <person name="Xu X."/>
            <person name="Janke A."/>
        </authorList>
    </citation>
    <scope>NUCLEOTIDE SEQUENCE [GENOMIC DNA]</scope>
</reference>
<name>NU4LM_ODORR</name>
<dbReference type="EC" id="7.1.1.2"/>
<dbReference type="EMBL" id="AJ428576">
    <property type="protein sequence ID" value="CAD21714.1"/>
    <property type="molecule type" value="Genomic_DNA"/>
</dbReference>
<dbReference type="RefSeq" id="NP_659345.1">
    <property type="nucleotide sequence ID" value="NC_004029.2"/>
</dbReference>
<dbReference type="SMR" id="Q8LWS1"/>
<dbReference type="GeneID" id="805042"/>
<dbReference type="CTD" id="4539"/>
<dbReference type="GO" id="GO:0005743">
    <property type="term" value="C:mitochondrial inner membrane"/>
    <property type="evidence" value="ECO:0000250"/>
    <property type="project" value="UniProtKB"/>
</dbReference>
<dbReference type="GO" id="GO:0045271">
    <property type="term" value="C:respiratory chain complex I"/>
    <property type="evidence" value="ECO:0000250"/>
    <property type="project" value="UniProtKB"/>
</dbReference>
<dbReference type="GO" id="GO:0008137">
    <property type="term" value="F:NADH dehydrogenase (ubiquinone) activity"/>
    <property type="evidence" value="ECO:0000250"/>
    <property type="project" value="UniProtKB"/>
</dbReference>
<dbReference type="GO" id="GO:0042773">
    <property type="term" value="P:ATP synthesis coupled electron transport"/>
    <property type="evidence" value="ECO:0007669"/>
    <property type="project" value="InterPro"/>
</dbReference>
<dbReference type="FunFam" id="1.10.287.3510:FF:000002">
    <property type="entry name" value="NADH-ubiquinone oxidoreductase chain 4L"/>
    <property type="match status" value="1"/>
</dbReference>
<dbReference type="Gene3D" id="1.10.287.3510">
    <property type="match status" value="1"/>
</dbReference>
<dbReference type="InterPro" id="IPR001133">
    <property type="entry name" value="NADH_UbQ_OxRdtase_chain4L/K"/>
</dbReference>
<dbReference type="InterPro" id="IPR039428">
    <property type="entry name" value="NUOK/Mnh_C1-like"/>
</dbReference>
<dbReference type="PANTHER" id="PTHR11434:SF0">
    <property type="entry name" value="NADH-UBIQUINONE OXIDOREDUCTASE CHAIN 4L"/>
    <property type="match status" value="1"/>
</dbReference>
<dbReference type="PANTHER" id="PTHR11434">
    <property type="entry name" value="NADH-UBIQUINONE OXIDOREDUCTASE SUBUNIT ND4L"/>
    <property type="match status" value="1"/>
</dbReference>
<dbReference type="Pfam" id="PF00420">
    <property type="entry name" value="Oxidored_q2"/>
    <property type="match status" value="1"/>
</dbReference>
<protein>
    <recommendedName>
        <fullName>NADH-ubiquinone oxidoreductase chain 4L</fullName>
        <ecNumber>7.1.1.2</ecNumber>
    </recommendedName>
    <alternativeName>
        <fullName>NADH dehydrogenase subunit 4L</fullName>
    </alternativeName>
</protein>
<keyword id="KW-0249">Electron transport</keyword>
<keyword id="KW-0472">Membrane</keyword>
<keyword id="KW-0496">Mitochondrion</keyword>
<keyword id="KW-0999">Mitochondrion inner membrane</keyword>
<keyword id="KW-0520">NAD</keyword>
<keyword id="KW-0679">Respiratory chain</keyword>
<keyword id="KW-1278">Translocase</keyword>
<keyword id="KW-0812">Transmembrane</keyword>
<keyword id="KW-1133">Transmembrane helix</keyword>
<keyword id="KW-0813">Transport</keyword>
<keyword id="KW-0830">Ubiquinone</keyword>
<geneLocation type="mitochondrion"/>
<proteinExistence type="inferred from homology"/>
<accession>Q8LWS1</accession>
<feature type="chain" id="PRO_0000275080" description="NADH-ubiquinone oxidoreductase chain 4L">
    <location>
        <begin position="1"/>
        <end position="98"/>
    </location>
</feature>
<feature type="transmembrane region" description="Helical" evidence="3">
    <location>
        <begin position="1"/>
        <end position="21"/>
    </location>
</feature>
<feature type="transmembrane region" description="Helical" evidence="3">
    <location>
        <begin position="29"/>
        <end position="49"/>
    </location>
</feature>
<feature type="transmembrane region" description="Helical" evidence="3">
    <location>
        <begin position="61"/>
        <end position="81"/>
    </location>
</feature>
<sequence length="98" mass="10825">MSMVYANIFMAFVVSLMGMLVYRSHLMSSLLCLEGMMLSLFVMMSVTILNNHFTLANMAPIILLVFAACEAALGLSLLVMVSNTYGTDYVQNLNLLQC</sequence>
<gene>
    <name type="primary">MT-ND4L</name>
    <name type="synonym">MTND4L</name>
    <name type="synonym">NADH4L</name>
    <name type="synonym">ND4L</name>
</gene>
<evidence type="ECO:0000250" key="1">
    <source>
        <dbReference type="UniProtKB" id="P03901"/>
    </source>
</evidence>
<evidence type="ECO:0000250" key="2">
    <source>
        <dbReference type="UniProtKB" id="P03902"/>
    </source>
</evidence>
<evidence type="ECO:0000255" key="3"/>
<evidence type="ECO:0000305" key="4"/>
<comment type="function">
    <text evidence="1">Core subunit of the mitochondrial membrane respiratory chain NADH dehydrogenase (Complex I) which catalyzes electron transfer from NADH through the respiratory chain, using ubiquinone as an electron acceptor. Part of the enzyme membrane arm which is embedded in the lipid bilayer and involved in proton translocation.</text>
</comment>
<comment type="catalytic activity">
    <reaction evidence="1">
        <text>a ubiquinone + NADH + 5 H(+)(in) = a ubiquinol + NAD(+) + 4 H(+)(out)</text>
        <dbReference type="Rhea" id="RHEA:29091"/>
        <dbReference type="Rhea" id="RHEA-COMP:9565"/>
        <dbReference type="Rhea" id="RHEA-COMP:9566"/>
        <dbReference type="ChEBI" id="CHEBI:15378"/>
        <dbReference type="ChEBI" id="CHEBI:16389"/>
        <dbReference type="ChEBI" id="CHEBI:17976"/>
        <dbReference type="ChEBI" id="CHEBI:57540"/>
        <dbReference type="ChEBI" id="CHEBI:57945"/>
        <dbReference type="EC" id="7.1.1.2"/>
    </reaction>
    <physiologicalReaction direction="left-to-right" evidence="1">
        <dbReference type="Rhea" id="RHEA:29092"/>
    </physiologicalReaction>
</comment>
<comment type="subunit">
    <text evidence="2">Core subunit of respiratory chain NADH dehydrogenase (Complex I) which is composed of 45 different subunits.</text>
</comment>
<comment type="subcellular location">
    <subcellularLocation>
        <location evidence="2">Mitochondrion inner membrane</location>
        <topology evidence="3">Multi-pass membrane protein</topology>
    </subcellularLocation>
</comment>
<comment type="similarity">
    <text evidence="4">Belongs to the complex I subunit 4L family.</text>
</comment>